<gene>
    <name evidence="3" type="primary">nptA</name>
    <name type="ORF">ANIA_11080</name>
</gene>
<protein>
    <recommendedName>
        <fullName evidence="4">Tryptophan dimethylallyltransferase nptA</fullName>
        <ecNumber evidence="2">2.5.1.34</ecNumber>
    </recommendedName>
    <alternativeName>
        <fullName evidence="3">4-dimethylallyltryptophan synthase nptA</fullName>
        <shortName evidence="3">DMATS nptA</shortName>
    </alternativeName>
    <alternativeName>
        <fullName evidence="4">Nidulanin A prenyltransferase</fullName>
    </alternativeName>
</protein>
<comment type="function">
    <text evidence="2">Nonribosomal peptide synthase involved in the synthesis of nidulanin A and derived compounds (PubMed:23248299). Nidulanin A is a tetracyclopeptide with the sequence L-Phe-L-Kyn-L-Val-D-Val and an isoprene unit N-linked to the amino group of L-kynurenine (PubMed:23248299). The NRPS nlsA is responsible of the synthesis of the cyclopeptide and the prenyltransferase nptA adds the isoprene unit on the L-kynurenine residue of nidulanin A (PubMed:23248299). Further modifications lead to additional oxygenated related compounds (PubMed:23248299).</text>
</comment>
<comment type="catalytic activity">
    <reaction evidence="2">
        <text>L-tryptophan + dimethylallyl diphosphate = 4-(3-methylbut-2-enyl)-L-tryptophan + diphosphate</text>
        <dbReference type="Rhea" id="RHEA:14173"/>
        <dbReference type="ChEBI" id="CHEBI:33019"/>
        <dbReference type="ChEBI" id="CHEBI:57623"/>
        <dbReference type="ChEBI" id="CHEBI:57912"/>
        <dbReference type="ChEBI" id="CHEBI:58209"/>
        <dbReference type="EC" id="2.5.1.34"/>
    </reaction>
</comment>
<comment type="pathway">
    <text evidence="2">Secondary metabolite biosynthesis.</text>
</comment>
<comment type="subunit">
    <text evidence="1">Homodimer.</text>
</comment>
<comment type="disruption phenotype">
    <text evidence="2">Accumulates the unprenylated precursor of nidulanin A, but none of the three prenylated forms, including nidulanin A and two oxygenated related compounds (PubMed:23248299).</text>
</comment>
<comment type="similarity">
    <text evidence="4">Belongs to the tryptophan dimethylallyltransferase family.</text>
</comment>
<dbReference type="EC" id="2.5.1.34" evidence="2"/>
<dbReference type="EMBL" id="BN001305">
    <property type="protein sequence ID" value="CBF80641.1"/>
    <property type="molecule type" value="Genomic_DNA"/>
</dbReference>
<dbReference type="SMR" id="C8VEJ5"/>
<dbReference type="EnsemblFungi" id="CBF80641">
    <property type="protein sequence ID" value="CBF80641"/>
    <property type="gene ID" value="ANIA_11080"/>
</dbReference>
<dbReference type="VEuPathDB" id="FungiDB:AN11080"/>
<dbReference type="eggNOG" id="ENOG502S2XP">
    <property type="taxonomic scope" value="Eukaryota"/>
</dbReference>
<dbReference type="HOGENOM" id="CLU_037431_0_0_1"/>
<dbReference type="InParanoid" id="C8VEJ5"/>
<dbReference type="OMA" id="GFLAWDC"/>
<dbReference type="OrthoDB" id="5392033at2759"/>
<dbReference type="Proteomes" id="UP000000560">
    <property type="component" value="Chromosome V"/>
</dbReference>
<dbReference type="GO" id="GO:0050364">
    <property type="term" value="F:tryptophan dimethylallyltransferase activity"/>
    <property type="evidence" value="ECO:0007669"/>
    <property type="project" value="UniProtKB-EC"/>
</dbReference>
<dbReference type="GO" id="GO:0009820">
    <property type="term" value="P:alkaloid metabolic process"/>
    <property type="evidence" value="ECO:0007669"/>
    <property type="project" value="InterPro"/>
</dbReference>
<dbReference type="CDD" id="cd13929">
    <property type="entry name" value="PT-DMATS_CymD"/>
    <property type="match status" value="1"/>
</dbReference>
<dbReference type="InterPro" id="IPR033964">
    <property type="entry name" value="Aro_prenylTrfase"/>
</dbReference>
<dbReference type="InterPro" id="IPR017795">
    <property type="entry name" value="Aro_prenylTrfase_DMATS"/>
</dbReference>
<dbReference type="InterPro" id="IPR012148">
    <property type="entry name" value="DMATS-type_fun"/>
</dbReference>
<dbReference type="NCBIfam" id="TIGR03429">
    <property type="entry name" value="arom_pren_DMATS"/>
    <property type="match status" value="1"/>
</dbReference>
<dbReference type="PANTHER" id="PTHR40627">
    <property type="entry name" value="INDOLE PRENYLTRANSFERASE TDIB-RELATED"/>
    <property type="match status" value="1"/>
</dbReference>
<dbReference type="PANTHER" id="PTHR40627:SF3">
    <property type="entry name" value="PRENYLTRANSFERASE ASQH2-RELATED"/>
    <property type="match status" value="1"/>
</dbReference>
<dbReference type="Pfam" id="PF11991">
    <property type="entry name" value="Trp_DMAT"/>
    <property type="match status" value="1"/>
</dbReference>
<dbReference type="PIRSF" id="PIRSF000509">
    <property type="entry name" value="Trp_DMAT"/>
    <property type="match status" value="1"/>
</dbReference>
<dbReference type="SFLD" id="SFLDS00036">
    <property type="entry name" value="Aromatic_Prenyltransferase"/>
    <property type="match status" value="1"/>
</dbReference>
<dbReference type="SFLD" id="SFLDG01162">
    <property type="entry name" value="I"/>
    <property type="match status" value="1"/>
</dbReference>
<organism>
    <name type="scientific">Emericella nidulans (strain FGSC A4 / ATCC 38163 / CBS 112.46 / NRRL 194 / M139)</name>
    <name type="common">Aspergillus nidulans</name>
    <dbReference type="NCBI Taxonomy" id="227321"/>
    <lineage>
        <taxon>Eukaryota</taxon>
        <taxon>Fungi</taxon>
        <taxon>Dikarya</taxon>
        <taxon>Ascomycota</taxon>
        <taxon>Pezizomycotina</taxon>
        <taxon>Eurotiomycetes</taxon>
        <taxon>Eurotiomycetidae</taxon>
        <taxon>Eurotiales</taxon>
        <taxon>Aspergillaceae</taxon>
        <taxon>Aspergillus</taxon>
        <taxon>Aspergillus subgen. Nidulantes</taxon>
    </lineage>
</organism>
<proteinExistence type="inferred from homology"/>
<evidence type="ECO:0000250" key="1">
    <source>
        <dbReference type="UniProtKB" id="Q50EL0"/>
    </source>
</evidence>
<evidence type="ECO:0000269" key="2">
    <source>
    </source>
</evidence>
<evidence type="ECO:0000303" key="3">
    <source>
    </source>
</evidence>
<evidence type="ECO:0000305" key="4"/>
<evidence type="ECO:0000312" key="5">
    <source>
        <dbReference type="Proteomes" id="UP000000560"/>
    </source>
</evidence>
<reference key="1">
    <citation type="journal article" date="2005" name="Nature">
        <title>Sequencing of Aspergillus nidulans and comparative analysis with A. fumigatus and A. oryzae.</title>
        <authorList>
            <person name="Galagan J.E."/>
            <person name="Calvo S.E."/>
            <person name="Cuomo C."/>
            <person name="Ma L.-J."/>
            <person name="Wortman J.R."/>
            <person name="Batzoglou S."/>
            <person name="Lee S.-I."/>
            <person name="Bastuerkmen M."/>
            <person name="Spevak C.C."/>
            <person name="Clutterbuck J."/>
            <person name="Kapitonov V."/>
            <person name="Jurka J."/>
            <person name="Scazzocchio C."/>
            <person name="Farman M.L."/>
            <person name="Butler J."/>
            <person name="Purcell S."/>
            <person name="Harris S."/>
            <person name="Braus G.H."/>
            <person name="Draht O."/>
            <person name="Busch S."/>
            <person name="D'Enfert C."/>
            <person name="Bouchier C."/>
            <person name="Goldman G.H."/>
            <person name="Bell-Pedersen D."/>
            <person name="Griffiths-Jones S."/>
            <person name="Doonan J.H."/>
            <person name="Yu J."/>
            <person name="Vienken K."/>
            <person name="Pain A."/>
            <person name="Freitag M."/>
            <person name="Selker E.U."/>
            <person name="Archer D.B."/>
            <person name="Penalva M.A."/>
            <person name="Oakley B.R."/>
            <person name="Momany M."/>
            <person name="Tanaka T."/>
            <person name="Kumagai T."/>
            <person name="Asai K."/>
            <person name="Machida M."/>
            <person name="Nierman W.C."/>
            <person name="Denning D.W."/>
            <person name="Caddick M.X."/>
            <person name="Hynes M."/>
            <person name="Paoletti M."/>
            <person name="Fischer R."/>
            <person name="Miller B.L."/>
            <person name="Dyer P.S."/>
            <person name="Sachs M.S."/>
            <person name="Osmani S.A."/>
            <person name="Birren B.W."/>
        </authorList>
    </citation>
    <scope>NUCLEOTIDE SEQUENCE [LARGE SCALE GENOMIC DNA]</scope>
    <source>
        <strain>FGSC A4 / ATCC 38163 / CBS 112.46 / NRRL 194 / M139</strain>
    </source>
</reference>
<reference key="2">
    <citation type="journal article" date="2009" name="Fungal Genet. Biol.">
        <title>The 2008 update of the Aspergillus nidulans genome annotation: a community effort.</title>
        <authorList>
            <person name="Wortman J.R."/>
            <person name="Gilsenan J.M."/>
            <person name="Joardar V."/>
            <person name="Deegan J."/>
            <person name="Clutterbuck J."/>
            <person name="Andersen M.R."/>
            <person name="Archer D."/>
            <person name="Bencina M."/>
            <person name="Braus G."/>
            <person name="Coutinho P."/>
            <person name="von Dohren H."/>
            <person name="Doonan J."/>
            <person name="Driessen A.J."/>
            <person name="Durek P."/>
            <person name="Espeso E."/>
            <person name="Fekete E."/>
            <person name="Flipphi M."/>
            <person name="Estrada C.G."/>
            <person name="Geysens S."/>
            <person name="Goldman G."/>
            <person name="de Groot P.W."/>
            <person name="Hansen K."/>
            <person name="Harris S.D."/>
            <person name="Heinekamp T."/>
            <person name="Helmstaedt K."/>
            <person name="Henrissat B."/>
            <person name="Hofmann G."/>
            <person name="Homan T."/>
            <person name="Horio T."/>
            <person name="Horiuchi H."/>
            <person name="James S."/>
            <person name="Jones M."/>
            <person name="Karaffa L."/>
            <person name="Karanyi Z."/>
            <person name="Kato M."/>
            <person name="Keller N."/>
            <person name="Kelly D.E."/>
            <person name="Kiel J.A."/>
            <person name="Kim J.M."/>
            <person name="van der Klei I.J."/>
            <person name="Klis F.M."/>
            <person name="Kovalchuk A."/>
            <person name="Krasevec N."/>
            <person name="Kubicek C.P."/>
            <person name="Liu B."/>
            <person name="Maccabe A."/>
            <person name="Meyer V."/>
            <person name="Mirabito P."/>
            <person name="Miskei M."/>
            <person name="Mos M."/>
            <person name="Mullins J."/>
            <person name="Nelson D.R."/>
            <person name="Nielsen J."/>
            <person name="Oakley B.R."/>
            <person name="Osmani S.A."/>
            <person name="Pakula T."/>
            <person name="Paszewski A."/>
            <person name="Paulsen I."/>
            <person name="Pilsyk S."/>
            <person name="Pocsi I."/>
            <person name="Punt P.J."/>
            <person name="Ram A.F."/>
            <person name="Ren Q."/>
            <person name="Robellet X."/>
            <person name="Robson G."/>
            <person name="Seiboth B."/>
            <person name="van Solingen P."/>
            <person name="Specht T."/>
            <person name="Sun J."/>
            <person name="Taheri-Talesh N."/>
            <person name="Takeshita N."/>
            <person name="Ussery D."/>
            <person name="vanKuyk P.A."/>
            <person name="Visser H."/>
            <person name="van de Vondervoort P.J."/>
            <person name="de Vries R.P."/>
            <person name="Walton J."/>
            <person name="Xiang X."/>
            <person name="Xiong Y."/>
            <person name="Zeng A.P."/>
            <person name="Brandt B.W."/>
            <person name="Cornell M.J."/>
            <person name="van den Hondel C.A."/>
            <person name="Visser J."/>
            <person name="Oliver S.G."/>
            <person name="Turner G."/>
        </authorList>
    </citation>
    <scope>GENOME REANNOTATION</scope>
    <source>
        <strain evidence="5">FGSC A4 / ATCC 38163 / CBS 112.46 / NRRL 194 / M139</strain>
    </source>
</reference>
<reference key="3">
    <citation type="journal article" date="2013" name="Proc. Natl. Acad. Sci. U.S.A.">
        <title>Accurate prediction of secondary metabolite gene clusters in filamentous fungi.</title>
        <authorList>
            <person name="Andersen M.R."/>
            <person name="Nielsen J.B."/>
            <person name="Klitgaard A."/>
            <person name="Petersen L.M."/>
            <person name="Zachariasen M."/>
            <person name="Hansen T.J."/>
            <person name="Blicher L.H."/>
            <person name="Gotfredsen C.H."/>
            <person name="Larsen T.O."/>
            <person name="Nielsen K.F."/>
            <person name="Mortensen U.H."/>
        </authorList>
    </citation>
    <scope>FUNCTION</scope>
    <scope>DISRUPTION PHENOTYPE</scope>
    <scope>PATHWAY</scope>
</reference>
<feature type="chain" id="PRO_0000444199" description="Tryptophan dimethylallyltransferase nptA">
    <location>
        <begin position="1"/>
        <end position="434"/>
    </location>
</feature>
<feature type="binding site" evidence="1">
    <location>
        <begin position="91"/>
        <end position="92"/>
    </location>
    <ligand>
        <name>L-tryptophan</name>
        <dbReference type="ChEBI" id="CHEBI:57912"/>
    </ligand>
</feature>
<feature type="binding site" evidence="1">
    <location>
        <position position="100"/>
    </location>
    <ligand>
        <name>L-tryptophan</name>
        <dbReference type="ChEBI" id="CHEBI:57912"/>
    </ligand>
</feature>
<feature type="binding site" evidence="1">
    <location>
        <position position="115"/>
    </location>
    <ligand>
        <name>substrate</name>
    </ligand>
</feature>
<feature type="binding site" evidence="1">
    <location>
        <position position="202"/>
    </location>
    <ligand>
        <name>substrate</name>
    </ligand>
</feature>
<feature type="binding site" evidence="1">
    <location>
        <position position="204"/>
    </location>
    <ligand>
        <name>substrate</name>
    </ligand>
</feature>
<feature type="binding site" evidence="1">
    <location>
        <position position="206"/>
    </location>
    <ligand>
        <name>L-tryptophan</name>
        <dbReference type="ChEBI" id="CHEBI:57912"/>
    </ligand>
</feature>
<feature type="binding site" evidence="1">
    <location>
        <position position="271"/>
    </location>
    <ligand>
        <name>substrate</name>
    </ligand>
</feature>
<feature type="binding site" evidence="1">
    <location>
        <position position="273"/>
    </location>
    <ligand>
        <name>substrate</name>
    </ligand>
</feature>
<feature type="binding site" evidence="1">
    <location>
        <position position="275"/>
    </location>
    <ligand>
        <name>substrate</name>
    </ligand>
</feature>
<feature type="binding site" evidence="1">
    <location>
        <position position="358"/>
    </location>
    <ligand>
        <name>substrate</name>
    </ligand>
</feature>
<feature type="binding site" evidence="1">
    <location>
        <position position="423"/>
    </location>
    <ligand>
        <name>substrate</name>
    </ligand>
</feature>
<feature type="binding site" evidence="1">
    <location>
        <position position="427"/>
    </location>
    <ligand>
        <name>substrate</name>
    </ligand>
</feature>
<keyword id="KW-1185">Reference proteome</keyword>
<keyword id="KW-0808">Transferase</keyword>
<name>NPTA_EMENI</name>
<accession>C8VEJ5</accession>
<sequence length="434" mass="48915">MVATPDDPRAQTIVDLFNGQGSAPAPFDVLTSALSFPTRDQEQWWRKTGPMFGQMLASSGYTLDQQYRHLTFYYNQLVPRLGPHPATFHSSLTVSGLPMEFSINYQQKGAHPMVRIGAEPIDSFSGTERDPFNQIPPAEMVNHFSRAGVKGFDPELYAYFEPKHSLTREQQARLPKEVPGGDKLKTQYAFGFDFKGDEVSLKGYSYPGLKATMAGQEVAKLVGDGVKDLKNQGKLDCTEAWAAVEAYMTELNGWGYHNLWAWDYVSPAKSRLKFYSFVMDVVDKTKLEELWTLNGRATSPAHQEGLRHLKELWDIIDLKNVGKRDLPADAPQIPEDAAPMVWNYEMTAGNPLPFGKGYFPLQGLNDAGCIQKLVKFFELMGWKDLAAKYPETIQSFYPGLDLSKTSHLLMWVSYTYSEKTGVYLSIYNHPCPEK</sequence>